<feature type="signal peptide" evidence="1">
    <location>
        <begin position="1"/>
        <end position="26"/>
    </location>
</feature>
<feature type="chain" id="PRO_5000238623" description="Tol-Pal system protein TolB" evidence="1">
    <location>
        <begin position="27"/>
        <end position="444"/>
    </location>
</feature>
<feature type="region of interest" description="Disordered" evidence="2">
    <location>
        <begin position="287"/>
        <end position="311"/>
    </location>
</feature>
<feature type="compositionally biased region" description="Polar residues" evidence="2">
    <location>
        <begin position="287"/>
        <end position="310"/>
    </location>
</feature>
<comment type="function">
    <text evidence="1">Part of the Tol-Pal system, which plays a role in outer membrane invagination during cell division and is important for maintaining outer membrane integrity.</text>
</comment>
<comment type="subunit">
    <text evidence="1">The Tol-Pal system is composed of five core proteins: the inner membrane proteins TolA, TolQ and TolR, the periplasmic protein TolB and the outer membrane protein Pal. They form a network linking the inner and outer membranes and the peptidoglycan layer.</text>
</comment>
<comment type="subcellular location">
    <subcellularLocation>
        <location evidence="1">Periplasm</location>
    </subcellularLocation>
</comment>
<comment type="similarity">
    <text evidence="1">Belongs to the TolB family.</text>
</comment>
<proteinExistence type="inferred from homology"/>
<organism>
    <name type="scientific">Cereibacter sphaeroides (strain ATCC 17025 / ATH 2.4.3)</name>
    <name type="common">Rhodobacter sphaeroides</name>
    <dbReference type="NCBI Taxonomy" id="349102"/>
    <lineage>
        <taxon>Bacteria</taxon>
        <taxon>Pseudomonadati</taxon>
        <taxon>Pseudomonadota</taxon>
        <taxon>Alphaproteobacteria</taxon>
        <taxon>Rhodobacterales</taxon>
        <taxon>Paracoccaceae</taxon>
        <taxon>Cereibacter</taxon>
    </lineage>
</organism>
<protein>
    <recommendedName>
        <fullName evidence="1">Tol-Pal system protein TolB</fullName>
    </recommendedName>
</protein>
<gene>
    <name evidence="1" type="primary">tolB</name>
    <name type="ordered locus">Rsph17025_0562</name>
</gene>
<dbReference type="EMBL" id="CP000661">
    <property type="protein sequence ID" value="ABP69468.1"/>
    <property type="molecule type" value="Genomic_DNA"/>
</dbReference>
<dbReference type="SMR" id="A4WQ04"/>
<dbReference type="STRING" id="349102.Rsph17025_0562"/>
<dbReference type="KEGG" id="rsq:Rsph17025_0562"/>
<dbReference type="eggNOG" id="COG0823">
    <property type="taxonomic scope" value="Bacteria"/>
</dbReference>
<dbReference type="HOGENOM" id="CLU_047123_0_0_5"/>
<dbReference type="BioCyc" id="RSPH349102:G1G8M-579-MONOMER"/>
<dbReference type="GO" id="GO:0042597">
    <property type="term" value="C:periplasmic space"/>
    <property type="evidence" value="ECO:0007669"/>
    <property type="project" value="UniProtKB-SubCell"/>
</dbReference>
<dbReference type="GO" id="GO:0051301">
    <property type="term" value="P:cell division"/>
    <property type="evidence" value="ECO:0007669"/>
    <property type="project" value="UniProtKB-UniRule"/>
</dbReference>
<dbReference type="GO" id="GO:0017038">
    <property type="term" value="P:protein import"/>
    <property type="evidence" value="ECO:0007669"/>
    <property type="project" value="InterPro"/>
</dbReference>
<dbReference type="Gene3D" id="2.120.10.30">
    <property type="entry name" value="TolB, C-terminal domain"/>
    <property type="match status" value="1"/>
</dbReference>
<dbReference type="Gene3D" id="3.40.50.10070">
    <property type="entry name" value="TolB, N-terminal domain"/>
    <property type="match status" value="1"/>
</dbReference>
<dbReference type="HAMAP" id="MF_00671">
    <property type="entry name" value="TolB"/>
    <property type="match status" value="1"/>
</dbReference>
<dbReference type="InterPro" id="IPR011042">
    <property type="entry name" value="6-blade_b-propeller_TolB-like"/>
</dbReference>
<dbReference type="InterPro" id="IPR011659">
    <property type="entry name" value="PD40"/>
</dbReference>
<dbReference type="InterPro" id="IPR014167">
    <property type="entry name" value="Tol-Pal_TolB"/>
</dbReference>
<dbReference type="InterPro" id="IPR007195">
    <property type="entry name" value="TolB_N"/>
</dbReference>
<dbReference type="NCBIfam" id="TIGR02800">
    <property type="entry name" value="propeller_TolB"/>
    <property type="match status" value="1"/>
</dbReference>
<dbReference type="PANTHER" id="PTHR36842:SF1">
    <property type="entry name" value="PROTEIN TOLB"/>
    <property type="match status" value="1"/>
</dbReference>
<dbReference type="PANTHER" id="PTHR36842">
    <property type="entry name" value="PROTEIN TOLB HOMOLOG"/>
    <property type="match status" value="1"/>
</dbReference>
<dbReference type="Pfam" id="PF07676">
    <property type="entry name" value="PD40"/>
    <property type="match status" value="5"/>
</dbReference>
<dbReference type="Pfam" id="PF04052">
    <property type="entry name" value="TolB_N"/>
    <property type="match status" value="1"/>
</dbReference>
<dbReference type="SUPFAM" id="SSF52964">
    <property type="entry name" value="TolB, N-terminal domain"/>
    <property type="match status" value="1"/>
</dbReference>
<dbReference type="SUPFAM" id="SSF69304">
    <property type="entry name" value="Tricorn protease N-terminal domain"/>
    <property type="match status" value="1"/>
</dbReference>
<keyword id="KW-0131">Cell cycle</keyword>
<keyword id="KW-0132">Cell division</keyword>
<keyword id="KW-0574">Periplasm</keyword>
<keyword id="KW-0732">Signal</keyword>
<reference key="1">
    <citation type="submission" date="2007-04" db="EMBL/GenBank/DDBJ databases">
        <title>Complete sequence of chromosome of Rhodobacter sphaeroides ATCC 17025.</title>
        <authorList>
            <consortium name="US DOE Joint Genome Institute"/>
            <person name="Copeland A."/>
            <person name="Lucas S."/>
            <person name="Lapidus A."/>
            <person name="Barry K."/>
            <person name="Detter J.C."/>
            <person name="Glavina del Rio T."/>
            <person name="Hammon N."/>
            <person name="Israni S."/>
            <person name="Dalin E."/>
            <person name="Tice H."/>
            <person name="Pitluck S."/>
            <person name="Chertkov O."/>
            <person name="Brettin T."/>
            <person name="Bruce D."/>
            <person name="Han C."/>
            <person name="Schmutz J."/>
            <person name="Larimer F."/>
            <person name="Land M."/>
            <person name="Hauser L."/>
            <person name="Kyrpides N."/>
            <person name="Kim E."/>
            <person name="Richardson P."/>
            <person name="Mackenzie C."/>
            <person name="Choudhary M."/>
            <person name="Donohue T.J."/>
            <person name="Kaplan S."/>
        </authorList>
    </citation>
    <scope>NUCLEOTIDE SEQUENCE [LARGE SCALE GENOMIC DNA]</scope>
    <source>
        <strain>ATCC 17025 / ATH 2.4.3</strain>
    </source>
</reference>
<sequence length="444" mass="47378">MNLFRSLAPMGLALALLLPAAAPALAQQGPLRIQITEGVIEPLPFAVPNFVAETSGASQLAQDMARVIAADLSGTGLFREIPASAHISRVTSFDAPIAYNDWKAINAQALITGSVSASGDRVVVKFRLHDVFSDQPLGEGLQFAGSASGWRRMAHKVADVAYSRITGEGGYFDSRVVFVSETGPKNARAKRLAVMDYDGANVQYLTDSSSIVLAPRFSPTGDRILFTSYSTGFPRIYLMDVGSLATRSLAEQPGTMTFAPRFAPDGRTVAFSLEQGGNTDIYTLDTASGTRRQLTNSPSIETAPSYSPDGSQIVFESDRSGGQQLYIMPAGGGEPRRISNGAGRYGTPVWSPRGDLIAFTKQHQGRFHIGVMRTDGSEERLLTASFLDEGPTWAPNGRVLMFTREGAGAGGQPALYSVDISGRNLKKVPLSVPASDPAWSPLLP</sequence>
<name>TOLB_CERS5</name>
<accession>A4WQ04</accession>
<evidence type="ECO:0000255" key="1">
    <source>
        <dbReference type="HAMAP-Rule" id="MF_00671"/>
    </source>
</evidence>
<evidence type="ECO:0000256" key="2">
    <source>
        <dbReference type="SAM" id="MobiDB-lite"/>
    </source>
</evidence>